<protein>
    <recommendedName>
        <fullName>Rhodopsin</fullName>
    </recommendedName>
</protein>
<keyword id="KW-0966">Cell projection</keyword>
<keyword id="KW-0157">Chromophore</keyword>
<keyword id="KW-1015">Disulfide bond</keyword>
<keyword id="KW-0297">G-protein coupled receptor</keyword>
<keyword id="KW-0449">Lipoprotein</keyword>
<keyword id="KW-0472">Membrane</keyword>
<keyword id="KW-0564">Palmitate</keyword>
<keyword id="KW-0597">Phosphoprotein</keyword>
<keyword id="KW-0600">Photoreceptor protein</keyword>
<keyword id="KW-0675">Receptor</keyword>
<keyword id="KW-0681">Retinal protein</keyword>
<keyword id="KW-0716">Sensory transduction</keyword>
<keyword id="KW-0807">Transducer</keyword>
<keyword id="KW-0812">Transmembrane</keyword>
<keyword id="KW-1133">Transmembrane helix</keyword>
<keyword id="KW-0844">Vision</keyword>
<sequence>YLVSPAAYAALGAYMFLLILVGFPVNFLTLYVTLDHKKLRTPLNYILLNLAVADLFMVLGGFTTTMYTSMHGYFVLGRLGCNLEGFFATLGGEIALWSLVVLAIERWIVVCKPISNFRFTEDHAIMGLAFSWVMALTCAVPPLVGWSRYIPEGMQCSCGVDYYTRAEGFNTESFVLYMFTVHFLIPLSVIFFCYGRLLCAVKEAAAAQQESETTQRAEKEVSRMVVLMVIGFLVCWLPYASVAWWIFCNQGSEFGPIFMTLPAFFAKTSAIYNPLIYICMNKQFRHCMI</sequence>
<reference key="1">
    <citation type="journal article" date="1997" name="Mol. Phylogenet. Evol.">
        <title>Molecular evolution of the cottoid fish endemic to Lake Baikal deduced from nuclear DNA evidence.</title>
        <authorList>
            <person name="Hunt D.M."/>
            <person name="Fitzgibbon J."/>
            <person name="Slobodyanyuk S.J."/>
            <person name="Bowmaker J.K."/>
            <person name="Dulai K.S."/>
        </authorList>
    </citation>
    <scope>NUCLEOTIDE SEQUENCE [GENOMIC DNA]</scope>
</reference>
<accession>O42451</accession>
<gene>
    <name type="primary">rho</name>
</gene>
<comment type="function">
    <text evidence="1 2 3">Photoreceptor required for image-forming vision at low light intensity. While most salt water fish species use retinal as chromophore, most freshwater fish use 3-dehydroretinal, or a mixture of retinal and 3-dehydroretinal (By similarity). Light-induced isomerization of 11-cis to all-trans retinal triggers a conformational change that activates signaling via G-proteins. Subsequent receptor phosphorylation mediates displacement of the bound G-protein alpha subunit by arrestin and terminates signaling (By similarity).</text>
</comment>
<comment type="subcellular location">
    <subcellularLocation>
        <location evidence="2">Membrane</location>
        <topology evidence="2">Multi-pass membrane protein</topology>
    </subcellularLocation>
    <subcellularLocation>
        <location evidence="4">Cell projection</location>
        <location evidence="4">Cilium</location>
        <location evidence="4">Photoreceptor outer segment</location>
    </subcellularLocation>
    <text evidence="2">Synthesized in the inner segment (IS) of rod photoreceptor cells before vectorial transport to disk membranes in the rod outer segment (OS) photosensory cilia.</text>
</comment>
<comment type="PTM">
    <text evidence="1">Phosphorylated on some or all of the serine and threonine residues present in the C-terminal region.</text>
</comment>
<comment type="PTM">
    <text evidence="1">Contains one covalently linked retinal chromophore.</text>
</comment>
<comment type="similarity">
    <text evidence="5">Belongs to the G-protein coupled receptor 1 family. Opsin subfamily.</text>
</comment>
<evidence type="ECO:0000250" key="1">
    <source>
        <dbReference type="UniProtKB" id="P02699"/>
    </source>
</evidence>
<evidence type="ECO:0000250" key="2">
    <source>
        <dbReference type="UniProtKB" id="P08100"/>
    </source>
</evidence>
<evidence type="ECO:0000250" key="3">
    <source>
        <dbReference type="UniProtKB" id="P32309"/>
    </source>
</evidence>
<evidence type="ECO:0000250" key="4">
    <source>
        <dbReference type="UniProtKB" id="P35359"/>
    </source>
</evidence>
<evidence type="ECO:0000255" key="5">
    <source>
        <dbReference type="PROSITE-ProRule" id="PRU00521"/>
    </source>
</evidence>
<evidence type="ECO:0000305" key="6"/>
<organism>
    <name type="scientific">Procottus jeittelesii</name>
    <name type="common">Red sculpin</name>
    <dbReference type="NCBI Taxonomy" id="61631"/>
    <lineage>
        <taxon>Eukaryota</taxon>
        <taxon>Metazoa</taxon>
        <taxon>Chordata</taxon>
        <taxon>Craniata</taxon>
        <taxon>Vertebrata</taxon>
        <taxon>Euteleostomi</taxon>
        <taxon>Actinopterygii</taxon>
        <taxon>Neopterygii</taxon>
        <taxon>Teleostei</taxon>
        <taxon>Neoteleostei</taxon>
        <taxon>Acanthomorphata</taxon>
        <taxon>Eupercaria</taxon>
        <taxon>Perciformes</taxon>
        <taxon>Cottioidei</taxon>
        <taxon>Cottales</taxon>
        <taxon>Cottidae</taxon>
        <taxon>Procottus</taxon>
    </lineage>
</organism>
<feature type="chain" id="PRO_0000197702" description="Rhodopsin">
    <location>
        <begin position="1" status="less than"/>
        <end position="289" status="greater than"/>
    </location>
</feature>
<feature type="topological domain" description="Extracellular" evidence="6">
    <location>
        <begin position="1" status="less than"/>
        <end position="7"/>
    </location>
</feature>
<feature type="transmembrane region" description="Helical; Name=1" evidence="1">
    <location>
        <begin position="8"/>
        <end position="32"/>
    </location>
</feature>
<feature type="topological domain" description="Cytoplasmic" evidence="6">
    <location>
        <begin position="33"/>
        <end position="44"/>
    </location>
</feature>
<feature type="transmembrane region" description="Helical; Name=2" evidence="1">
    <location>
        <begin position="45"/>
        <end position="67"/>
    </location>
</feature>
<feature type="topological domain" description="Extracellular" evidence="6">
    <location>
        <begin position="68"/>
        <end position="81"/>
    </location>
</feature>
<feature type="transmembrane region" description="Helical; Name=3" evidence="1">
    <location>
        <begin position="82"/>
        <end position="104"/>
    </location>
</feature>
<feature type="topological domain" description="Cytoplasmic" evidence="6">
    <location>
        <begin position="105"/>
        <end position="123"/>
    </location>
</feature>
<feature type="transmembrane region" description="Helical; Name=4" evidence="1">
    <location>
        <begin position="124"/>
        <end position="144"/>
    </location>
</feature>
<feature type="topological domain" description="Extracellular" evidence="6">
    <location>
        <begin position="145"/>
        <end position="173"/>
    </location>
</feature>
<feature type="transmembrane region" description="Helical; Name=5" evidence="1">
    <location>
        <begin position="174"/>
        <end position="195"/>
    </location>
</feature>
<feature type="topological domain" description="Cytoplasmic" evidence="6">
    <location>
        <begin position="196"/>
        <end position="223"/>
    </location>
</feature>
<feature type="transmembrane region" description="Helical; Name=6" evidence="1">
    <location>
        <begin position="224"/>
        <end position="245"/>
    </location>
</feature>
<feature type="topological domain" description="Extracellular" evidence="6">
    <location>
        <begin position="246"/>
        <end position="257"/>
    </location>
</feature>
<feature type="transmembrane region" description="Helical; Name=7" evidence="1">
    <location>
        <begin position="258"/>
        <end position="279"/>
    </location>
</feature>
<feature type="topological domain" description="Cytoplasmic" evidence="6">
    <location>
        <begin position="280"/>
        <end position="289" status="greater than"/>
    </location>
</feature>
<feature type="short sequence motif" description="'Ionic lock' involved in activated form stabilization" evidence="1">
    <location>
        <begin position="105"/>
        <end position="107"/>
    </location>
</feature>
<feature type="site" description="Plays an important role in the conformation switch to the active conformation" evidence="1">
    <location>
        <position position="84"/>
    </location>
</feature>
<feature type="modified residue" description="N6-(retinylidene)lysine" evidence="1">
    <location>
        <position position="267"/>
    </location>
</feature>
<feature type="disulfide bond" evidence="5">
    <location>
        <begin position="81"/>
        <end position="158"/>
    </location>
</feature>
<feature type="non-terminal residue">
    <location>
        <position position="1"/>
    </location>
</feature>
<feature type="non-terminal residue">
    <location>
        <position position="289"/>
    </location>
</feature>
<dbReference type="EMBL" id="U97269">
    <property type="protein sequence ID" value="AAB61723.1"/>
    <property type="molecule type" value="Genomic_DNA"/>
</dbReference>
<dbReference type="SMR" id="O42451"/>
<dbReference type="GO" id="GO:0016020">
    <property type="term" value="C:membrane"/>
    <property type="evidence" value="ECO:0000250"/>
    <property type="project" value="UniProtKB"/>
</dbReference>
<dbReference type="GO" id="GO:0097381">
    <property type="term" value="C:photoreceptor disc membrane"/>
    <property type="evidence" value="ECO:0000250"/>
    <property type="project" value="UniProtKB"/>
</dbReference>
<dbReference type="GO" id="GO:0005886">
    <property type="term" value="C:plasma membrane"/>
    <property type="evidence" value="ECO:0000250"/>
    <property type="project" value="UniProtKB"/>
</dbReference>
<dbReference type="GO" id="GO:0005502">
    <property type="term" value="F:11-cis retinal binding"/>
    <property type="evidence" value="ECO:0000250"/>
    <property type="project" value="UniProtKB"/>
</dbReference>
<dbReference type="GO" id="GO:0008020">
    <property type="term" value="F:G protein-coupled photoreceptor activity"/>
    <property type="evidence" value="ECO:0000250"/>
    <property type="project" value="UniProtKB"/>
</dbReference>
<dbReference type="GO" id="GO:0016038">
    <property type="term" value="P:absorption of visible light"/>
    <property type="evidence" value="ECO:0000250"/>
    <property type="project" value="UniProtKB"/>
</dbReference>
<dbReference type="GO" id="GO:0016056">
    <property type="term" value="P:G protein-coupled opsin signaling pathway"/>
    <property type="evidence" value="ECO:0000250"/>
    <property type="project" value="UniProtKB"/>
</dbReference>
<dbReference type="GO" id="GO:0007601">
    <property type="term" value="P:visual perception"/>
    <property type="evidence" value="ECO:0007669"/>
    <property type="project" value="UniProtKB-KW"/>
</dbReference>
<dbReference type="CDD" id="cd15080">
    <property type="entry name" value="7tmA_MWS_opsin"/>
    <property type="match status" value="1"/>
</dbReference>
<dbReference type="FunFam" id="1.20.1070.10:FF:000357">
    <property type="entry name" value="Rhodopsin"/>
    <property type="match status" value="1"/>
</dbReference>
<dbReference type="Gene3D" id="1.20.1070.10">
    <property type="entry name" value="Rhodopsin 7-helix transmembrane proteins"/>
    <property type="match status" value="1"/>
</dbReference>
<dbReference type="InterPro" id="IPR050125">
    <property type="entry name" value="GPCR_opsins"/>
</dbReference>
<dbReference type="InterPro" id="IPR000276">
    <property type="entry name" value="GPCR_Rhodpsn"/>
</dbReference>
<dbReference type="InterPro" id="IPR017452">
    <property type="entry name" value="GPCR_Rhodpsn_7TM"/>
</dbReference>
<dbReference type="InterPro" id="IPR001760">
    <property type="entry name" value="Opsin"/>
</dbReference>
<dbReference type="InterPro" id="IPR027430">
    <property type="entry name" value="Retinal_BS"/>
</dbReference>
<dbReference type="InterPro" id="IPR000732">
    <property type="entry name" value="Rhodopsin"/>
</dbReference>
<dbReference type="PANTHER" id="PTHR24240">
    <property type="entry name" value="OPSIN"/>
    <property type="match status" value="1"/>
</dbReference>
<dbReference type="Pfam" id="PF00001">
    <property type="entry name" value="7tm_1"/>
    <property type="match status" value="1"/>
</dbReference>
<dbReference type="PRINTS" id="PR00237">
    <property type="entry name" value="GPCRRHODOPSN"/>
</dbReference>
<dbReference type="PRINTS" id="PR00238">
    <property type="entry name" value="OPSIN"/>
</dbReference>
<dbReference type="PRINTS" id="PR00579">
    <property type="entry name" value="RHODOPSIN"/>
</dbReference>
<dbReference type="SUPFAM" id="SSF81321">
    <property type="entry name" value="Family A G protein-coupled receptor-like"/>
    <property type="match status" value="1"/>
</dbReference>
<dbReference type="PROSITE" id="PS00237">
    <property type="entry name" value="G_PROTEIN_RECEP_F1_1"/>
    <property type="match status" value="1"/>
</dbReference>
<dbReference type="PROSITE" id="PS50262">
    <property type="entry name" value="G_PROTEIN_RECEP_F1_2"/>
    <property type="match status" value="1"/>
</dbReference>
<dbReference type="PROSITE" id="PS00238">
    <property type="entry name" value="OPSIN"/>
    <property type="match status" value="1"/>
</dbReference>
<name>OPSD_PROJE</name>
<proteinExistence type="inferred from homology"/>